<protein>
    <recommendedName>
        <fullName evidence="1">Ribonuclease HII</fullName>
        <shortName evidence="1">RNase HII</shortName>
        <ecNumber evidence="1">3.1.26.4</ecNumber>
    </recommendedName>
</protein>
<dbReference type="EC" id="3.1.26.4" evidence="1"/>
<dbReference type="EMBL" id="CP000439">
    <property type="protein sequence ID" value="ABK90174.1"/>
    <property type="molecule type" value="Genomic_DNA"/>
</dbReference>
<dbReference type="RefSeq" id="WP_003040082.1">
    <property type="nucleotide sequence ID" value="NC_008601.1"/>
</dbReference>
<dbReference type="SMR" id="A0Q7F9"/>
<dbReference type="KEGG" id="ftn:FTN_1293"/>
<dbReference type="KEGG" id="ftx:AW25_713"/>
<dbReference type="BioCyc" id="FTUL401614:G1G75-1338-MONOMER"/>
<dbReference type="Proteomes" id="UP000000762">
    <property type="component" value="Chromosome"/>
</dbReference>
<dbReference type="GO" id="GO:0005737">
    <property type="term" value="C:cytoplasm"/>
    <property type="evidence" value="ECO:0007669"/>
    <property type="project" value="UniProtKB-SubCell"/>
</dbReference>
<dbReference type="GO" id="GO:0032299">
    <property type="term" value="C:ribonuclease H2 complex"/>
    <property type="evidence" value="ECO:0007669"/>
    <property type="project" value="TreeGrafter"/>
</dbReference>
<dbReference type="GO" id="GO:0030145">
    <property type="term" value="F:manganese ion binding"/>
    <property type="evidence" value="ECO:0007669"/>
    <property type="project" value="UniProtKB-UniRule"/>
</dbReference>
<dbReference type="GO" id="GO:0003723">
    <property type="term" value="F:RNA binding"/>
    <property type="evidence" value="ECO:0007669"/>
    <property type="project" value="InterPro"/>
</dbReference>
<dbReference type="GO" id="GO:0004523">
    <property type="term" value="F:RNA-DNA hybrid ribonuclease activity"/>
    <property type="evidence" value="ECO:0007669"/>
    <property type="project" value="UniProtKB-UniRule"/>
</dbReference>
<dbReference type="GO" id="GO:0043137">
    <property type="term" value="P:DNA replication, removal of RNA primer"/>
    <property type="evidence" value="ECO:0007669"/>
    <property type="project" value="TreeGrafter"/>
</dbReference>
<dbReference type="GO" id="GO:0006298">
    <property type="term" value="P:mismatch repair"/>
    <property type="evidence" value="ECO:0007669"/>
    <property type="project" value="TreeGrafter"/>
</dbReference>
<dbReference type="CDD" id="cd07182">
    <property type="entry name" value="RNase_HII_bacteria_HII_like"/>
    <property type="match status" value="1"/>
</dbReference>
<dbReference type="FunFam" id="3.30.420.10:FF:000006">
    <property type="entry name" value="Ribonuclease HII"/>
    <property type="match status" value="1"/>
</dbReference>
<dbReference type="Gene3D" id="3.30.420.10">
    <property type="entry name" value="Ribonuclease H-like superfamily/Ribonuclease H"/>
    <property type="match status" value="1"/>
</dbReference>
<dbReference type="HAMAP" id="MF_00052_B">
    <property type="entry name" value="RNase_HII_B"/>
    <property type="match status" value="1"/>
</dbReference>
<dbReference type="InterPro" id="IPR022898">
    <property type="entry name" value="RNase_HII"/>
</dbReference>
<dbReference type="InterPro" id="IPR001352">
    <property type="entry name" value="RNase_HII/HIII"/>
</dbReference>
<dbReference type="InterPro" id="IPR024567">
    <property type="entry name" value="RNase_HII/HIII_dom"/>
</dbReference>
<dbReference type="InterPro" id="IPR012337">
    <property type="entry name" value="RNaseH-like_sf"/>
</dbReference>
<dbReference type="InterPro" id="IPR036397">
    <property type="entry name" value="RNaseH_sf"/>
</dbReference>
<dbReference type="NCBIfam" id="NF000595">
    <property type="entry name" value="PRK00015.1-3"/>
    <property type="match status" value="1"/>
</dbReference>
<dbReference type="NCBIfam" id="NF000596">
    <property type="entry name" value="PRK00015.1-4"/>
    <property type="match status" value="1"/>
</dbReference>
<dbReference type="PANTHER" id="PTHR10954">
    <property type="entry name" value="RIBONUCLEASE H2 SUBUNIT A"/>
    <property type="match status" value="1"/>
</dbReference>
<dbReference type="PANTHER" id="PTHR10954:SF18">
    <property type="entry name" value="RIBONUCLEASE HII"/>
    <property type="match status" value="1"/>
</dbReference>
<dbReference type="Pfam" id="PF01351">
    <property type="entry name" value="RNase_HII"/>
    <property type="match status" value="1"/>
</dbReference>
<dbReference type="SUPFAM" id="SSF53098">
    <property type="entry name" value="Ribonuclease H-like"/>
    <property type="match status" value="1"/>
</dbReference>
<dbReference type="PROSITE" id="PS51975">
    <property type="entry name" value="RNASE_H_2"/>
    <property type="match status" value="1"/>
</dbReference>
<gene>
    <name evidence="1" type="primary">rnhB</name>
    <name type="ordered locus">FTN_1293</name>
</gene>
<name>RNH2_FRATN</name>
<proteinExistence type="inferred from homology"/>
<feature type="chain" id="PRO_1000031144" description="Ribonuclease HII">
    <location>
        <begin position="1"/>
        <end position="185"/>
    </location>
</feature>
<feature type="domain" description="RNase H type-2" evidence="2">
    <location>
        <begin position="1"/>
        <end position="185"/>
    </location>
</feature>
<feature type="binding site" evidence="1">
    <location>
        <position position="7"/>
    </location>
    <ligand>
        <name>a divalent metal cation</name>
        <dbReference type="ChEBI" id="CHEBI:60240"/>
    </ligand>
</feature>
<feature type="binding site" evidence="1">
    <location>
        <position position="8"/>
    </location>
    <ligand>
        <name>a divalent metal cation</name>
        <dbReference type="ChEBI" id="CHEBI:60240"/>
    </ligand>
</feature>
<feature type="binding site" evidence="1">
    <location>
        <position position="99"/>
    </location>
    <ligand>
        <name>a divalent metal cation</name>
        <dbReference type="ChEBI" id="CHEBI:60240"/>
    </ligand>
</feature>
<evidence type="ECO:0000255" key="1">
    <source>
        <dbReference type="HAMAP-Rule" id="MF_00052"/>
    </source>
</evidence>
<evidence type="ECO:0000255" key="2">
    <source>
        <dbReference type="PROSITE-ProRule" id="PRU01319"/>
    </source>
</evidence>
<keyword id="KW-0963">Cytoplasm</keyword>
<keyword id="KW-0255">Endonuclease</keyword>
<keyword id="KW-0378">Hydrolase</keyword>
<keyword id="KW-0464">Manganese</keyword>
<keyword id="KW-0479">Metal-binding</keyword>
<keyword id="KW-0540">Nuclease</keyword>
<reference key="1">
    <citation type="journal article" date="2007" name="Genome Biol.">
        <title>Comparison of Francisella tularensis genomes reveals evolutionary events associated with the emergence of human pathogenic strains.</title>
        <authorList>
            <person name="Rohmer L."/>
            <person name="Fong C."/>
            <person name="Abmayr S."/>
            <person name="Wasnick M."/>
            <person name="Larson Freeman T.J."/>
            <person name="Radey M."/>
            <person name="Guina T."/>
            <person name="Svensson K."/>
            <person name="Hayden H.S."/>
            <person name="Jacobs M."/>
            <person name="Gallagher L.A."/>
            <person name="Manoil C."/>
            <person name="Ernst R.K."/>
            <person name="Drees B."/>
            <person name="Buckley D."/>
            <person name="Haugen E."/>
            <person name="Bovee D."/>
            <person name="Zhou Y."/>
            <person name="Chang J."/>
            <person name="Levy R."/>
            <person name="Lim R."/>
            <person name="Gillett W."/>
            <person name="Guenthener D."/>
            <person name="Kang A."/>
            <person name="Shaffer S.A."/>
            <person name="Taylor G."/>
            <person name="Chen J."/>
            <person name="Gallis B."/>
            <person name="D'Argenio D.A."/>
            <person name="Forsman M."/>
            <person name="Olson M.V."/>
            <person name="Goodlett D.R."/>
            <person name="Kaul R."/>
            <person name="Miller S.I."/>
            <person name="Brittnacher M.J."/>
        </authorList>
    </citation>
    <scope>NUCLEOTIDE SEQUENCE [LARGE SCALE GENOMIC DNA]</scope>
    <source>
        <strain>U112</strain>
    </source>
</reference>
<comment type="function">
    <text evidence="1">Endonuclease that specifically degrades the RNA of RNA-DNA hybrids.</text>
</comment>
<comment type="catalytic activity">
    <reaction evidence="1">
        <text>Endonucleolytic cleavage to 5'-phosphomonoester.</text>
        <dbReference type="EC" id="3.1.26.4"/>
    </reaction>
</comment>
<comment type="cofactor">
    <cofactor evidence="1">
        <name>Mn(2+)</name>
        <dbReference type="ChEBI" id="CHEBI:29035"/>
    </cofactor>
    <cofactor evidence="1">
        <name>Mg(2+)</name>
        <dbReference type="ChEBI" id="CHEBI:18420"/>
    </cofactor>
    <text evidence="1">Manganese or magnesium. Binds 1 divalent metal ion per monomer in the absence of substrate. May bind a second metal ion after substrate binding.</text>
</comment>
<comment type="subcellular location">
    <subcellularLocation>
        <location evidence="1">Cytoplasm</location>
    </subcellularLocation>
</comment>
<comment type="similarity">
    <text evidence="1">Belongs to the RNase HII family.</text>
</comment>
<accession>A0Q7F9</accession>
<sequence>MIILGIDEAGRGPLSGPVVAAGVILDQDKIIDGLADSKKLTEKKRQSLYQQIITHAKAYTIVEISPQQIDELNILQATLKAMHQVANNLERQFDKVLVDGNKLPNWDYNSEAIVKGDSKIIEISAASILAKVHRDNICLEHDRLYPQYGFAKHKGYPTKEHLENIKKYGVLDIHRKSYKPIQLLL</sequence>
<organism>
    <name type="scientific">Francisella tularensis subsp. novicida (strain U112)</name>
    <dbReference type="NCBI Taxonomy" id="401614"/>
    <lineage>
        <taxon>Bacteria</taxon>
        <taxon>Pseudomonadati</taxon>
        <taxon>Pseudomonadota</taxon>
        <taxon>Gammaproteobacteria</taxon>
        <taxon>Thiotrichales</taxon>
        <taxon>Francisellaceae</taxon>
        <taxon>Francisella</taxon>
    </lineage>
</organism>